<reference key="1">
    <citation type="submission" date="2007-09" db="EMBL/GenBank/DDBJ databases">
        <title>Complete genome sequence of Rickettsia rickettsii.</title>
        <authorList>
            <person name="Madan A."/>
            <person name="Fahey J."/>
            <person name="Helton E."/>
            <person name="Ketteman M."/>
            <person name="Madan A."/>
            <person name="Rodrigues S."/>
            <person name="Sanchez A."/>
            <person name="Dasch G."/>
            <person name="Eremeeva M."/>
        </authorList>
    </citation>
    <scope>NUCLEOTIDE SEQUENCE [LARGE SCALE GENOMIC DNA]</scope>
    <source>
        <strain>Sheila Smith</strain>
    </source>
</reference>
<comment type="function">
    <text evidence="1">The RuvA-RuvB-RuvC complex processes Holliday junction (HJ) DNA during genetic recombination and DNA repair. Endonuclease that resolves HJ intermediates. Cleaves cruciform DNA by making single-stranded nicks across the HJ at symmetrical positions within the homologous arms, yielding a 5'-phosphate and a 3'-hydroxyl group; requires a central core of homology in the junction. The consensus cleavage sequence is 5'-(A/T)TT(C/G)-3'. Cleavage occurs on the 3'-side of the TT dinucleotide at the point of strand exchange. HJ branch migration catalyzed by RuvA-RuvB allows RuvC to scan DNA until it finds its consensus sequence, where it cleaves and resolves the cruciform DNA.</text>
</comment>
<comment type="catalytic activity">
    <reaction evidence="1">
        <text>Endonucleolytic cleavage at a junction such as a reciprocal single-stranded crossover between two homologous DNA duplexes (Holliday junction).</text>
        <dbReference type="EC" id="3.1.21.10"/>
    </reaction>
</comment>
<comment type="cofactor">
    <cofactor evidence="1">
        <name>Mg(2+)</name>
        <dbReference type="ChEBI" id="CHEBI:18420"/>
    </cofactor>
    <text evidence="1">Binds 2 Mg(2+) ion per subunit.</text>
</comment>
<comment type="subunit">
    <text evidence="1">Homodimer which binds Holliday junction (HJ) DNA. The HJ becomes 2-fold symmetrical on binding to RuvC with unstacked arms; it has a different conformation from HJ DNA in complex with RuvA. In the full resolvosome a probable DNA-RuvA(4)-RuvB(12)-RuvC(2) complex forms which resolves the HJ.</text>
</comment>
<comment type="subcellular location">
    <subcellularLocation>
        <location evidence="1">Cytoplasm</location>
    </subcellularLocation>
</comment>
<comment type="similarity">
    <text evidence="1">Belongs to the RuvC family.</text>
</comment>
<dbReference type="EC" id="3.1.21.10" evidence="1"/>
<dbReference type="EMBL" id="CP000848">
    <property type="protein sequence ID" value="ABV75765.1"/>
    <property type="molecule type" value="Genomic_DNA"/>
</dbReference>
<dbReference type="RefSeq" id="WP_012150376.1">
    <property type="nucleotide sequence ID" value="NZ_CP121767.1"/>
</dbReference>
<dbReference type="SMR" id="A8GQU0"/>
<dbReference type="GeneID" id="79936952"/>
<dbReference type="KEGG" id="rri:A1G_00915"/>
<dbReference type="HOGENOM" id="CLU_091257_1_0_5"/>
<dbReference type="Proteomes" id="UP000006832">
    <property type="component" value="Chromosome"/>
</dbReference>
<dbReference type="GO" id="GO:0005737">
    <property type="term" value="C:cytoplasm"/>
    <property type="evidence" value="ECO:0007669"/>
    <property type="project" value="UniProtKB-SubCell"/>
</dbReference>
<dbReference type="GO" id="GO:0048476">
    <property type="term" value="C:Holliday junction resolvase complex"/>
    <property type="evidence" value="ECO:0007669"/>
    <property type="project" value="UniProtKB-UniRule"/>
</dbReference>
<dbReference type="GO" id="GO:0008821">
    <property type="term" value="F:crossover junction DNA endonuclease activity"/>
    <property type="evidence" value="ECO:0007669"/>
    <property type="project" value="UniProtKB-UniRule"/>
</dbReference>
<dbReference type="GO" id="GO:0003677">
    <property type="term" value="F:DNA binding"/>
    <property type="evidence" value="ECO:0007669"/>
    <property type="project" value="UniProtKB-KW"/>
</dbReference>
<dbReference type="GO" id="GO:0000287">
    <property type="term" value="F:magnesium ion binding"/>
    <property type="evidence" value="ECO:0007669"/>
    <property type="project" value="UniProtKB-UniRule"/>
</dbReference>
<dbReference type="GO" id="GO:0006310">
    <property type="term" value="P:DNA recombination"/>
    <property type="evidence" value="ECO:0007669"/>
    <property type="project" value="UniProtKB-UniRule"/>
</dbReference>
<dbReference type="GO" id="GO:0006281">
    <property type="term" value="P:DNA repair"/>
    <property type="evidence" value="ECO:0007669"/>
    <property type="project" value="UniProtKB-UniRule"/>
</dbReference>
<dbReference type="CDD" id="cd16962">
    <property type="entry name" value="RuvC"/>
    <property type="match status" value="1"/>
</dbReference>
<dbReference type="FunFam" id="3.30.420.10:FF:000002">
    <property type="entry name" value="Crossover junction endodeoxyribonuclease RuvC"/>
    <property type="match status" value="1"/>
</dbReference>
<dbReference type="Gene3D" id="3.30.420.10">
    <property type="entry name" value="Ribonuclease H-like superfamily/Ribonuclease H"/>
    <property type="match status" value="1"/>
</dbReference>
<dbReference type="HAMAP" id="MF_00034">
    <property type="entry name" value="RuvC"/>
    <property type="match status" value="1"/>
</dbReference>
<dbReference type="InterPro" id="IPR012337">
    <property type="entry name" value="RNaseH-like_sf"/>
</dbReference>
<dbReference type="InterPro" id="IPR036397">
    <property type="entry name" value="RNaseH_sf"/>
</dbReference>
<dbReference type="InterPro" id="IPR020563">
    <property type="entry name" value="X-over_junc_endoDNase_Mg_BS"/>
</dbReference>
<dbReference type="InterPro" id="IPR002176">
    <property type="entry name" value="X-over_junc_endoDNase_RuvC"/>
</dbReference>
<dbReference type="NCBIfam" id="TIGR00228">
    <property type="entry name" value="ruvC"/>
    <property type="match status" value="1"/>
</dbReference>
<dbReference type="PANTHER" id="PTHR30194">
    <property type="entry name" value="CROSSOVER JUNCTION ENDODEOXYRIBONUCLEASE RUVC"/>
    <property type="match status" value="1"/>
</dbReference>
<dbReference type="PANTHER" id="PTHR30194:SF3">
    <property type="entry name" value="CROSSOVER JUNCTION ENDODEOXYRIBONUCLEASE RUVC"/>
    <property type="match status" value="1"/>
</dbReference>
<dbReference type="Pfam" id="PF02075">
    <property type="entry name" value="RuvC"/>
    <property type="match status" value="1"/>
</dbReference>
<dbReference type="PRINTS" id="PR00696">
    <property type="entry name" value="RSOLVASERUVC"/>
</dbReference>
<dbReference type="SUPFAM" id="SSF53098">
    <property type="entry name" value="Ribonuclease H-like"/>
    <property type="match status" value="1"/>
</dbReference>
<dbReference type="PROSITE" id="PS01321">
    <property type="entry name" value="RUVC"/>
    <property type="match status" value="1"/>
</dbReference>
<keyword id="KW-0963">Cytoplasm</keyword>
<keyword id="KW-0227">DNA damage</keyword>
<keyword id="KW-0233">DNA recombination</keyword>
<keyword id="KW-0234">DNA repair</keyword>
<keyword id="KW-0238">DNA-binding</keyword>
<keyword id="KW-0255">Endonuclease</keyword>
<keyword id="KW-0378">Hydrolase</keyword>
<keyword id="KW-0460">Magnesium</keyword>
<keyword id="KW-0479">Metal-binding</keyword>
<keyword id="KW-0540">Nuclease</keyword>
<protein>
    <recommendedName>
        <fullName evidence="1">Crossover junction endodeoxyribonuclease RuvC</fullName>
        <ecNumber evidence="1">3.1.21.10</ecNumber>
    </recommendedName>
    <alternativeName>
        <fullName evidence="1">Holliday junction nuclease RuvC</fullName>
    </alternativeName>
    <alternativeName>
        <fullName evidence="1">Holliday junction resolvase RuvC</fullName>
    </alternativeName>
</protein>
<gene>
    <name evidence="1" type="primary">ruvC</name>
    <name type="ordered locus">A1G_00915</name>
</gene>
<proteinExistence type="inferred from homology"/>
<name>RUVC_RICRS</name>
<sequence length="157" mass="17252">MIILGIDPALGSLGWAVVAKETAQLKYLASGIIRTNSKDAMHHRLAFINSTLEKVILEYQPNMAAIEETFVNTNSVTSLKLGYARGAIMSLIGRYNLDMREFKPNTVKKTVTGYGHAEKDQMLHMIKLLLSGTALITNSDEADAVAIAYTCLVTKNY</sequence>
<feature type="chain" id="PRO_1000002820" description="Crossover junction endodeoxyribonuclease RuvC">
    <location>
        <begin position="1"/>
        <end position="157"/>
    </location>
</feature>
<feature type="active site" evidence="1">
    <location>
        <position position="7"/>
    </location>
</feature>
<feature type="active site" evidence="1">
    <location>
        <position position="67"/>
    </location>
</feature>
<feature type="active site" evidence="1">
    <location>
        <position position="140"/>
    </location>
</feature>
<feature type="binding site" evidence="1">
    <location>
        <position position="7"/>
    </location>
    <ligand>
        <name>Mg(2+)</name>
        <dbReference type="ChEBI" id="CHEBI:18420"/>
        <label>1</label>
    </ligand>
</feature>
<feature type="binding site" evidence="1">
    <location>
        <position position="67"/>
    </location>
    <ligand>
        <name>Mg(2+)</name>
        <dbReference type="ChEBI" id="CHEBI:18420"/>
        <label>2</label>
    </ligand>
</feature>
<feature type="binding site" evidence="1">
    <location>
        <position position="140"/>
    </location>
    <ligand>
        <name>Mg(2+)</name>
        <dbReference type="ChEBI" id="CHEBI:18420"/>
        <label>1</label>
    </ligand>
</feature>
<organism>
    <name type="scientific">Rickettsia rickettsii (strain Sheila Smith)</name>
    <dbReference type="NCBI Taxonomy" id="392021"/>
    <lineage>
        <taxon>Bacteria</taxon>
        <taxon>Pseudomonadati</taxon>
        <taxon>Pseudomonadota</taxon>
        <taxon>Alphaproteobacteria</taxon>
        <taxon>Rickettsiales</taxon>
        <taxon>Rickettsiaceae</taxon>
        <taxon>Rickettsieae</taxon>
        <taxon>Rickettsia</taxon>
        <taxon>spotted fever group</taxon>
    </lineage>
</organism>
<evidence type="ECO:0000255" key="1">
    <source>
        <dbReference type="HAMAP-Rule" id="MF_00034"/>
    </source>
</evidence>
<accession>A8GQU0</accession>